<sequence>MNTKEISKVVDLVRESNPLVHNITNVVVTNFTANGLLALGASPVMAYAKEEVAEMTSIAGALVLNMGTLRPDEVEAMLLAGKSANMNDVPVLFDPVGAGATSYRTEVARHIPAEIELAIIRGNAAEIANVINEKWEIKGVDAGAGNGNVVSIAKQAADELNTVAVITGKEDVVTDGERTIVIRNGHSILTKVTGTGCLLTSVIGAFVAVEKDYAKAAVAALTFYGVAAELAAAKTVEKGPGSFQIEFLNQLANTTSSDIEKYGKIEVI</sequence>
<comment type="function">
    <text evidence="1">Catalyzes the phosphorylation of the hydroxyl group of 4-methyl-5-beta-hydroxyethylthiazole (THZ).</text>
</comment>
<comment type="catalytic activity">
    <reaction evidence="1">
        <text>5-(2-hydroxyethyl)-4-methylthiazole + ATP = 4-methyl-5-(2-phosphooxyethyl)-thiazole + ADP + H(+)</text>
        <dbReference type="Rhea" id="RHEA:24212"/>
        <dbReference type="ChEBI" id="CHEBI:15378"/>
        <dbReference type="ChEBI" id="CHEBI:17957"/>
        <dbReference type="ChEBI" id="CHEBI:30616"/>
        <dbReference type="ChEBI" id="CHEBI:58296"/>
        <dbReference type="ChEBI" id="CHEBI:456216"/>
        <dbReference type="EC" id="2.7.1.50"/>
    </reaction>
</comment>
<comment type="cofactor">
    <cofactor evidence="1">
        <name>Mg(2+)</name>
        <dbReference type="ChEBI" id="CHEBI:18420"/>
    </cofactor>
</comment>
<comment type="pathway">
    <text evidence="1">Cofactor biosynthesis; thiamine diphosphate biosynthesis; 4-methyl-5-(2-phosphoethyl)-thiazole from 5-(2-hydroxyethyl)-4-methylthiazole: step 1/1.</text>
</comment>
<comment type="similarity">
    <text evidence="1">Belongs to the Thz kinase family.</text>
</comment>
<gene>
    <name evidence="1" type="primary">thiM</name>
    <name type="ordered locus">BCE33L0348</name>
</gene>
<evidence type="ECO:0000255" key="1">
    <source>
        <dbReference type="HAMAP-Rule" id="MF_00228"/>
    </source>
</evidence>
<feature type="chain" id="PRO_1000021499" description="Hydroxyethylthiazole kinase">
    <location>
        <begin position="1"/>
        <end position="268"/>
    </location>
</feature>
<feature type="binding site" evidence="1">
    <location>
        <position position="45"/>
    </location>
    <ligand>
        <name>substrate</name>
    </ligand>
</feature>
<feature type="binding site" evidence="1">
    <location>
        <position position="121"/>
    </location>
    <ligand>
        <name>ATP</name>
        <dbReference type="ChEBI" id="CHEBI:30616"/>
    </ligand>
</feature>
<feature type="binding site" evidence="1">
    <location>
        <position position="167"/>
    </location>
    <ligand>
        <name>ATP</name>
        <dbReference type="ChEBI" id="CHEBI:30616"/>
    </ligand>
</feature>
<feature type="binding site" evidence="1">
    <location>
        <position position="194"/>
    </location>
    <ligand>
        <name>substrate</name>
    </ligand>
</feature>
<reference key="1">
    <citation type="journal article" date="2006" name="J. Bacteriol.">
        <title>Pathogenomic sequence analysis of Bacillus cereus and Bacillus thuringiensis isolates closely related to Bacillus anthracis.</title>
        <authorList>
            <person name="Han C.S."/>
            <person name="Xie G."/>
            <person name="Challacombe J.F."/>
            <person name="Altherr M.R."/>
            <person name="Bhotika S.S."/>
            <person name="Bruce D."/>
            <person name="Campbell C.S."/>
            <person name="Campbell M.L."/>
            <person name="Chen J."/>
            <person name="Chertkov O."/>
            <person name="Cleland C."/>
            <person name="Dimitrijevic M."/>
            <person name="Doggett N.A."/>
            <person name="Fawcett J.J."/>
            <person name="Glavina T."/>
            <person name="Goodwin L.A."/>
            <person name="Hill K.K."/>
            <person name="Hitchcock P."/>
            <person name="Jackson P.J."/>
            <person name="Keim P."/>
            <person name="Kewalramani A.R."/>
            <person name="Longmire J."/>
            <person name="Lucas S."/>
            <person name="Malfatti S."/>
            <person name="McMurry K."/>
            <person name="Meincke L.J."/>
            <person name="Misra M."/>
            <person name="Moseman B.L."/>
            <person name="Mundt M."/>
            <person name="Munk A.C."/>
            <person name="Okinaka R.T."/>
            <person name="Parson-Quintana B."/>
            <person name="Reilly L.P."/>
            <person name="Richardson P."/>
            <person name="Robinson D.L."/>
            <person name="Rubin E."/>
            <person name="Saunders E."/>
            <person name="Tapia R."/>
            <person name="Tesmer J.G."/>
            <person name="Thayer N."/>
            <person name="Thompson L.S."/>
            <person name="Tice H."/>
            <person name="Ticknor L.O."/>
            <person name="Wills P.L."/>
            <person name="Brettin T.S."/>
            <person name="Gilna P."/>
        </authorList>
    </citation>
    <scope>NUCLEOTIDE SEQUENCE [LARGE SCALE GENOMIC DNA]</scope>
    <source>
        <strain>ZK / E33L</strain>
    </source>
</reference>
<accession>Q63GK4</accession>
<dbReference type="EC" id="2.7.1.50" evidence="1"/>
<dbReference type="EMBL" id="CP000001">
    <property type="protein sequence ID" value="AAU19891.1"/>
    <property type="molecule type" value="Genomic_DNA"/>
</dbReference>
<dbReference type="RefSeq" id="WP_001092694.1">
    <property type="nucleotide sequence ID" value="NC_006274.1"/>
</dbReference>
<dbReference type="SMR" id="Q63GK4"/>
<dbReference type="KEGG" id="bcz:BCE33L0348"/>
<dbReference type="PATRIC" id="fig|288681.22.peg.5255"/>
<dbReference type="UniPathway" id="UPA00060">
    <property type="reaction ID" value="UER00139"/>
</dbReference>
<dbReference type="Proteomes" id="UP000002612">
    <property type="component" value="Chromosome"/>
</dbReference>
<dbReference type="GO" id="GO:0005524">
    <property type="term" value="F:ATP binding"/>
    <property type="evidence" value="ECO:0007669"/>
    <property type="project" value="UniProtKB-UniRule"/>
</dbReference>
<dbReference type="GO" id="GO:0004417">
    <property type="term" value="F:hydroxyethylthiazole kinase activity"/>
    <property type="evidence" value="ECO:0007669"/>
    <property type="project" value="UniProtKB-UniRule"/>
</dbReference>
<dbReference type="GO" id="GO:0000287">
    <property type="term" value="F:magnesium ion binding"/>
    <property type="evidence" value="ECO:0007669"/>
    <property type="project" value="UniProtKB-UniRule"/>
</dbReference>
<dbReference type="GO" id="GO:0009228">
    <property type="term" value="P:thiamine biosynthetic process"/>
    <property type="evidence" value="ECO:0007669"/>
    <property type="project" value="UniProtKB-KW"/>
</dbReference>
<dbReference type="GO" id="GO:0009229">
    <property type="term" value="P:thiamine diphosphate biosynthetic process"/>
    <property type="evidence" value="ECO:0007669"/>
    <property type="project" value="UniProtKB-UniRule"/>
</dbReference>
<dbReference type="CDD" id="cd01170">
    <property type="entry name" value="THZ_kinase"/>
    <property type="match status" value="1"/>
</dbReference>
<dbReference type="FunFam" id="3.40.1190.20:FF:000027">
    <property type="entry name" value="Hydroxyethylthiazole kinase"/>
    <property type="match status" value="1"/>
</dbReference>
<dbReference type="Gene3D" id="3.40.1190.20">
    <property type="match status" value="1"/>
</dbReference>
<dbReference type="HAMAP" id="MF_00228">
    <property type="entry name" value="Thz_kinase"/>
    <property type="match status" value="1"/>
</dbReference>
<dbReference type="InterPro" id="IPR000417">
    <property type="entry name" value="Hyethyz_kinase"/>
</dbReference>
<dbReference type="InterPro" id="IPR029056">
    <property type="entry name" value="Ribokinase-like"/>
</dbReference>
<dbReference type="NCBIfam" id="NF006830">
    <property type="entry name" value="PRK09355.1"/>
    <property type="match status" value="1"/>
</dbReference>
<dbReference type="NCBIfam" id="TIGR00694">
    <property type="entry name" value="thiM"/>
    <property type="match status" value="1"/>
</dbReference>
<dbReference type="Pfam" id="PF02110">
    <property type="entry name" value="HK"/>
    <property type="match status" value="1"/>
</dbReference>
<dbReference type="PIRSF" id="PIRSF000513">
    <property type="entry name" value="Thz_kinase"/>
    <property type="match status" value="1"/>
</dbReference>
<dbReference type="PRINTS" id="PR01099">
    <property type="entry name" value="HYETHTZKNASE"/>
</dbReference>
<dbReference type="SUPFAM" id="SSF53613">
    <property type="entry name" value="Ribokinase-like"/>
    <property type="match status" value="1"/>
</dbReference>
<name>THIM_BACCZ</name>
<organism>
    <name type="scientific">Bacillus cereus (strain ZK / E33L)</name>
    <dbReference type="NCBI Taxonomy" id="288681"/>
    <lineage>
        <taxon>Bacteria</taxon>
        <taxon>Bacillati</taxon>
        <taxon>Bacillota</taxon>
        <taxon>Bacilli</taxon>
        <taxon>Bacillales</taxon>
        <taxon>Bacillaceae</taxon>
        <taxon>Bacillus</taxon>
        <taxon>Bacillus cereus group</taxon>
    </lineage>
</organism>
<protein>
    <recommendedName>
        <fullName evidence="1">Hydroxyethylthiazole kinase</fullName>
        <ecNumber evidence="1">2.7.1.50</ecNumber>
    </recommendedName>
    <alternativeName>
        <fullName evidence="1">4-methyl-5-beta-hydroxyethylthiazole kinase</fullName>
        <shortName evidence="1">TH kinase</shortName>
        <shortName evidence="1">Thz kinase</shortName>
    </alternativeName>
</protein>
<proteinExistence type="inferred from homology"/>
<keyword id="KW-0067">ATP-binding</keyword>
<keyword id="KW-0418">Kinase</keyword>
<keyword id="KW-0460">Magnesium</keyword>
<keyword id="KW-0479">Metal-binding</keyword>
<keyword id="KW-0547">Nucleotide-binding</keyword>
<keyword id="KW-0784">Thiamine biosynthesis</keyword>
<keyword id="KW-0808">Transferase</keyword>